<name>FCA1_TRYBB</name>
<evidence type="ECO:0000255" key="1">
    <source>
        <dbReference type="PROSITE-ProRule" id="PRU00448"/>
    </source>
</evidence>
<evidence type="ECO:0000256" key="2">
    <source>
        <dbReference type="SAM" id="MobiDB-lite"/>
    </source>
</evidence>
<evidence type="ECO:0000305" key="3"/>
<proteinExistence type="evidence at transcript level"/>
<protein>
    <recommendedName>
        <fullName>Flagellar calcium-binding protein TB-17</fullName>
    </recommendedName>
    <alternativeName>
        <fullName>17 kDa calcimedin</fullName>
    </alternativeName>
    <alternativeName>
        <fullName>17 kDa calflagin</fullName>
    </alternativeName>
</protein>
<gene>
    <name type="primary">FCABP</name>
</gene>
<sequence length="233" mass="25492">MGCSGSKNASNPKDGAASKGGKDGKTTADRKVAWERIRCAIPRDKDAESKSRRIELFKQFDTNGTGKLGFREVLDGCYSILKLDEFTTHLPDIVQRAFDKAKDLGNKVKGVGEEDLVEFLEFRLMLCYIYDIFELTVIFDTMDKDGSLLLELHEFKEALPKLKEWGVDITDATTVFNEIDTNGSGVVTFDEFSCWAVTKKLQVSGDPDDEENGANEGDGANAGDGVPAAEGSA</sequence>
<comment type="function">
    <text>May contribute to the rapid motility of the trypanosomes, playing a role either in flagellar structure or in calcium metabolism. Could alternate between a GDP-bound inactive form to a calcium/GTP-bound active form.</text>
</comment>
<comment type="subcellular location">
    <subcellularLocation>
        <location>Cell projection</location>
        <location>Cilium</location>
        <location>Flagellum</location>
    </subcellularLocation>
</comment>
<comment type="domain">
    <text>This protein has four EF-hand domains, three of which may be functional calcium-binding sites.</text>
</comment>
<comment type="similarity">
    <text evidence="3">Belongs to the calflagin family.</text>
</comment>
<organism>
    <name type="scientific">Trypanosoma brucei brucei</name>
    <dbReference type="NCBI Taxonomy" id="5702"/>
    <lineage>
        <taxon>Eukaryota</taxon>
        <taxon>Discoba</taxon>
        <taxon>Euglenozoa</taxon>
        <taxon>Kinetoplastea</taxon>
        <taxon>Metakinetoplastina</taxon>
        <taxon>Trypanosomatida</taxon>
        <taxon>Trypanosomatidae</taxon>
        <taxon>Trypanosoma</taxon>
    </lineage>
</organism>
<reference key="1">
    <citation type="journal article" date="1990" name="Nucleic Acids Res.">
        <title>A putative flagellar Ca2(+)-binding protein of the flagellum of trypanosomatid protozoan parasites.</title>
        <authorList>
            <person name="Lee M.G.-S."/>
            <person name="Chen J."/>
            <person name="Ho A.W.M."/>
            <person name="D'Alesandro P."/>
            <person name="van der Ploeg L.H.T."/>
        </authorList>
    </citation>
    <scope>NUCLEOTIDE SEQUENCE [MRNA]</scope>
    <source>
        <strain>427</strain>
    </source>
</reference>
<keyword id="KW-0106">Calcium</keyword>
<keyword id="KW-0966">Cell projection</keyword>
<keyword id="KW-0969">Cilium</keyword>
<keyword id="KW-0282">Flagellum</keyword>
<keyword id="KW-0479">Metal-binding</keyword>
<keyword id="KW-0677">Repeat</keyword>
<accession>P17882</accession>
<feature type="chain" id="PRO_0000073735" description="Flagellar calcium-binding protein TB-17">
    <location>
        <begin position="1"/>
        <end position="233"/>
    </location>
</feature>
<feature type="domain" description="EF-hand 1" evidence="1">
    <location>
        <begin position="48"/>
        <end position="83"/>
    </location>
</feature>
<feature type="domain" description="EF-hand 2" evidence="1">
    <location>
        <begin position="130"/>
        <end position="165"/>
    </location>
</feature>
<feature type="domain" description="EF-hand 3" evidence="1">
    <location>
        <begin position="167"/>
        <end position="202"/>
    </location>
</feature>
<feature type="region of interest" description="Disordered" evidence="2">
    <location>
        <begin position="1"/>
        <end position="29"/>
    </location>
</feature>
<feature type="region of interest" description="Disordered" evidence="2">
    <location>
        <begin position="203"/>
        <end position="233"/>
    </location>
</feature>
<feature type="compositionally biased region" description="Polar residues" evidence="2">
    <location>
        <begin position="1"/>
        <end position="11"/>
    </location>
</feature>
<feature type="compositionally biased region" description="Basic and acidic residues" evidence="2">
    <location>
        <begin position="20"/>
        <end position="29"/>
    </location>
</feature>
<feature type="compositionally biased region" description="Low complexity" evidence="2">
    <location>
        <begin position="214"/>
        <end position="225"/>
    </location>
</feature>
<feature type="binding site" evidence="1">
    <location>
        <position position="61"/>
    </location>
    <ligand>
        <name>Ca(2+)</name>
        <dbReference type="ChEBI" id="CHEBI:29108"/>
        <label>1</label>
    </ligand>
</feature>
<feature type="binding site" evidence="1">
    <location>
        <position position="63"/>
    </location>
    <ligand>
        <name>Ca(2+)</name>
        <dbReference type="ChEBI" id="CHEBI:29108"/>
        <label>1</label>
    </ligand>
</feature>
<feature type="binding site" evidence="1">
    <location>
        <position position="65"/>
    </location>
    <ligand>
        <name>Ca(2+)</name>
        <dbReference type="ChEBI" id="CHEBI:29108"/>
        <label>1</label>
    </ligand>
</feature>
<feature type="binding site" evidence="1">
    <location>
        <position position="67"/>
    </location>
    <ligand>
        <name>Ca(2+)</name>
        <dbReference type="ChEBI" id="CHEBI:29108"/>
        <label>1</label>
    </ligand>
</feature>
<feature type="binding site" evidence="1">
    <location>
        <position position="72"/>
    </location>
    <ligand>
        <name>Ca(2+)</name>
        <dbReference type="ChEBI" id="CHEBI:29108"/>
        <label>1</label>
    </ligand>
</feature>
<feature type="binding site" evidence="3">
    <location>
        <position position="143"/>
    </location>
    <ligand>
        <name>Ca(2+)</name>
        <dbReference type="ChEBI" id="CHEBI:29108"/>
        <label>2</label>
    </ligand>
</feature>
<feature type="binding site" evidence="3">
    <location>
        <position position="145"/>
    </location>
    <ligand>
        <name>Ca(2+)</name>
        <dbReference type="ChEBI" id="CHEBI:29108"/>
        <label>2</label>
    </ligand>
</feature>
<feature type="binding site" evidence="3">
    <location>
        <position position="147"/>
    </location>
    <ligand>
        <name>Ca(2+)</name>
        <dbReference type="ChEBI" id="CHEBI:29108"/>
        <label>2</label>
    </ligand>
</feature>
<feature type="binding site" evidence="3">
    <location>
        <position position="154"/>
    </location>
    <ligand>
        <name>Ca(2+)</name>
        <dbReference type="ChEBI" id="CHEBI:29108"/>
        <label>2</label>
    </ligand>
</feature>
<feature type="binding site" evidence="1">
    <location>
        <position position="180"/>
    </location>
    <ligand>
        <name>Ca(2+)</name>
        <dbReference type="ChEBI" id="CHEBI:29108"/>
        <label>3</label>
    </ligand>
</feature>
<feature type="binding site" evidence="1">
    <location>
        <position position="182"/>
    </location>
    <ligand>
        <name>Ca(2+)</name>
        <dbReference type="ChEBI" id="CHEBI:29108"/>
        <label>3</label>
    </ligand>
</feature>
<feature type="binding site" evidence="1">
    <location>
        <position position="184"/>
    </location>
    <ligand>
        <name>Ca(2+)</name>
        <dbReference type="ChEBI" id="CHEBI:29108"/>
        <label>3</label>
    </ligand>
</feature>
<feature type="binding site" evidence="1">
    <location>
        <position position="191"/>
    </location>
    <ligand>
        <name>Ca(2+)</name>
        <dbReference type="ChEBI" id="CHEBI:29108"/>
        <label>3</label>
    </ligand>
</feature>
<dbReference type="EMBL" id="X53464">
    <property type="protein sequence ID" value="CAA37558.1"/>
    <property type="molecule type" value="mRNA"/>
</dbReference>
<dbReference type="PIR" id="S10515">
    <property type="entry name" value="AQUT17"/>
</dbReference>
<dbReference type="SMR" id="P17882"/>
<dbReference type="SwissPalm" id="P17882"/>
<dbReference type="GO" id="GO:0005929">
    <property type="term" value="C:cilium"/>
    <property type="evidence" value="ECO:0000314"/>
    <property type="project" value="GeneDB"/>
</dbReference>
<dbReference type="GO" id="GO:0005737">
    <property type="term" value="C:cytoplasm"/>
    <property type="evidence" value="ECO:0000314"/>
    <property type="project" value="GeneDB"/>
</dbReference>
<dbReference type="GO" id="GO:0031514">
    <property type="term" value="C:motile cilium"/>
    <property type="evidence" value="ECO:0007669"/>
    <property type="project" value="UniProtKB-SubCell"/>
</dbReference>
<dbReference type="GO" id="GO:0005509">
    <property type="term" value="F:calcium ion binding"/>
    <property type="evidence" value="ECO:0000255"/>
    <property type="project" value="GeneDB"/>
</dbReference>
<dbReference type="GO" id="GO:0006816">
    <property type="term" value="P:calcium ion transport"/>
    <property type="evidence" value="ECO:0000304"/>
    <property type="project" value="GeneDB"/>
</dbReference>
<dbReference type="CDD" id="cd00051">
    <property type="entry name" value="EFh"/>
    <property type="match status" value="1"/>
</dbReference>
<dbReference type="FunFam" id="1.10.238.10:FF:000433">
    <property type="entry name" value="Flagellar calcium-binding protein TB-24"/>
    <property type="match status" value="1"/>
</dbReference>
<dbReference type="Gene3D" id="1.10.238.10">
    <property type="entry name" value="EF-hand"/>
    <property type="match status" value="1"/>
</dbReference>
<dbReference type="InterPro" id="IPR003299">
    <property type="entry name" value="Calflagin-bd"/>
</dbReference>
<dbReference type="InterPro" id="IPR011992">
    <property type="entry name" value="EF-hand-dom_pair"/>
</dbReference>
<dbReference type="InterPro" id="IPR018247">
    <property type="entry name" value="EF_Hand_1_Ca_BS"/>
</dbReference>
<dbReference type="InterPro" id="IPR002048">
    <property type="entry name" value="EF_hand_dom"/>
</dbReference>
<dbReference type="InterPro" id="IPR054322">
    <property type="entry name" value="FCABP_EF-hand"/>
</dbReference>
<dbReference type="Pfam" id="PF13499">
    <property type="entry name" value="EF-hand_7"/>
    <property type="match status" value="1"/>
</dbReference>
<dbReference type="Pfam" id="PF22592">
    <property type="entry name" value="FCaBP_EF-hand"/>
    <property type="match status" value="1"/>
</dbReference>
<dbReference type="PRINTS" id="PR01362">
    <property type="entry name" value="CALFLAGIN"/>
</dbReference>
<dbReference type="SMART" id="SM00054">
    <property type="entry name" value="EFh"/>
    <property type="match status" value="3"/>
</dbReference>
<dbReference type="SUPFAM" id="SSF47473">
    <property type="entry name" value="EF-hand"/>
    <property type="match status" value="1"/>
</dbReference>
<dbReference type="PROSITE" id="PS00018">
    <property type="entry name" value="EF_HAND_1"/>
    <property type="match status" value="2"/>
</dbReference>
<dbReference type="PROSITE" id="PS50222">
    <property type="entry name" value="EF_HAND_2"/>
    <property type="match status" value="3"/>
</dbReference>